<sequence length="350" mass="38763">MNKSTLAIVVSIIASASVHAAEVYNKNGNKLDVYGKVKAMHYMSDYDSKDGDQSYVRFGFKGETQINDQLTGYGRWEAEFASNKAESDSSQQKTRLAFAGLKLKDIGSFDYGRNLGALYDVEAWTDMFPEFGGDSSAQTDNFMTKRASGLATYRNTDFFGIVDGLDLTLQYQGKNEDRDVKKQNGDGFGTSVSYDFGGSDFAVSGAYTLSDRTREQNLQRRGTGDKAEAWATGVKYDANDIYIATFYSETRNMTPVSGGFANKTQNFEAVIQYQFDFGLRPSLGYVLSKGKDIEGVGSEDLVNYIDVGATYYFNKNMSAFVDYKINQLDSDNTLGINDDDIVAIGLTYQF</sequence>
<organism>
    <name type="scientific">Salmonella typhimurium (strain LT2 / SGSC1412 / ATCC 700720)</name>
    <dbReference type="NCBI Taxonomy" id="99287"/>
    <lineage>
        <taxon>Bacteria</taxon>
        <taxon>Pseudomonadati</taxon>
        <taxon>Pseudomonadota</taxon>
        <taxon>Gammaproteobacteria</taxon>
        <taxon>Enterobacterales</taxon>
        <taxon>Enterobacteriaceae</taxon>
        <taxon>Salmonella</taxon>
    </lineage>
</organism>
<proteinExistence type="evidence at transcript level"/>
<dbReference type="EMBL" id="X68023">
    <property type="protein sequence ID" value="CAA48164.1"/>
    <property type="molecule type" value="Genomic_DNA"/>
</dbReference>
<dbReference type="EMBL" id="AE006468">
    <property type="protein sequence ID" value="AAL19276.1"/>
    <property type="molecule type" value="Genomic_DNA"/>
</dbReference>
<dbReference type="PIR" id="S25525">
    <property type="entry name" value="S25525"/>
</dbReference>
<dbReference type="RefSeq" id="NP_459317.1">
    <property type="nucleotide sequence ID" value="NC_003197.2"/>
</dbReference>
<dbReference type="RefSeq" id="WP_001043675.1">
    <property type="nucleotide sequence ID" value="NC_003197.2"/>
</dbReference>
<dbReference type="SMR" id="P30705"/>
<dbReference type="STRING" id="99287.STM0320"/>
<dbReference type="PaxDb" id="99287-STM0320"/>
<dbReference type="GeneID" id="1251839"/>
<dbReference type="KEGG" id="stm:STM0320"/>
<dbReference type="PATRIC" id="fig|99287.12.peg.340"/>
<dbReference type="HOGENOM" id="CLU_058202_0_0_6"/>
<dbReference type="OMA" id="KAMHYIS"/>
<dbReference type="PhylomeDB" id="P30705"/>
<dbReference type="BioCyc" id="SENT99287:STM0320-MONOMER"/>
<dbReference type="Proteomes" id="UP000001014">
    <property type="component" value="Chromosome"/>
</dbReference>
<dbReference type="GO" id="GO:0009279">
    <property type="term" value="C:cell outer membrane"/>
    <property type="evidence" value="ECO:0007669"/>
    <property type="project" value="UniProtKB-SubCell"/>
</dbReference>
<dbReference type="GO" id="GO:0046930">
    <property type="term" value="C:pore complex"/>
    <property type="evidence" value="ECO:0000318"/>
    <property type="project" value="GO_Central"/>
</dbReference>
<dbReference type="GO" id="GO:0015288">
    <property type="term" value="F:porin activity"/>
    <property type="evidence" value="ECO:0000318"/>
    <property type="project" value="GO_Central"/>
</dbReference>
<dbReference type="GO" id="GO:0034220">
    <property type="term" value="P:monoatomic ion transmembrane transport"/>
    <property type="evidence" value="ECO:0007669"/>
    <property type="project" value="InterPro"/>
</dbReference>
<dbReference type="CDD" id="cd00342">
    <property type="entry name" value="gram_neg_porins"/>
    <property type="match status" value="1"/>
</dbReference>
<dbReference type="FunFam" id="2.40.160.10:FF:000002">
    <property type="entry name" value="Outer membrane porin F"/>
    <property type="match status" value="1"/>
</dbReference>
<dbReference type="Gene3D" id="2.40.160.10">
    <property type="entry name" value="Porin"/>
    <property type="match status" value="1"/>
</dbReference>
<dbReference type="InterPro" id="IPR050298">
    <property type="entry name" value="Gram-neg_bact_OMP"/>
</dbReference>
<dbReference type="InterPro" id="IPR033900">
    <property type="entry name" value="Gram_neg_porin_domain"/>
</dbReference>
<dbReference type="InterPro" id="IPR023614">
    <property type="entry name" value="Porin_dom_sf"/>
</dbReference>
<dbReference type="InterPro" id="IPR001897">
    <property type="entry name" value="Porin_gammaproteobac"/>
</dbReference>
<dbReference type="InterPro" id="IPR001702">
    <property type="entry name" value="Porin_Gram-ve"/>
</dbReference>
<dbReference type="InterPro" id="IPR013793">
    <property type="entry name" value="Porin_Gram-ve_CS"/>
</dbReference>
<dbReference type="NCBIfam" id="NF007544">
    <property type="entry name" value="PRK10159.1"/>
    <property type="match status" value="1"/>
</dbReference>
<dbReference type="PANTHER" id="PTHR34501:SF5">
    <property type="entry name" value="OUTER MEMBRANE PORIN PHOE"/>
    <property type="match status" value="1"/>
</dbReference>
<dbReference type="PANTHER" id="PTHR34501">
    <property type="entry name" value="PROTEIN YDDL-RELATED"/>
    <property type="match status" value="1"/>
</dbReference>
<dbReference type="Pfam" id="PF00267">
    <property type="entry name" value="Porin_1"/>
    <property type="match status" value="1"/>
</dbReference>
<dbReference type="PRINTS" id="PR00183">
    <property type="entry name" value="ECOLIPORIN"/>
</dbReference>
<dbReference type="PRINTS" id="PR00182">
    <property type="entry name" value="ECOLNEIPORIN"/>
</dbReference>
<dbReference type="SUPFAM" id="SSF56935">
    <property type="entry name" value="Porins"/>
    <property type="match status" value="1"/>
</dbReference>
<dbReference type="PROSITE" id="PS00576">
    <property type="entry name" value="GRAM_NEG_PORIN"/>
    <property type="match status" value="1"/>
</dbReference>
<protein>
    <recommendedName>
        <fullName>Outer membrane porin PhoE</fullName>
    </recommendedName>
    <alternativeName>
        <fullName>Outer membrane pore protein E</fullName>
    </alternativeName>
</protein>
<reference key="1">
    <citation type="journal article" date="1992" name="Gene">
        <title>Characterization of the Salmonella typhimurium phoE gene and development of Salmonella-specific DNA probes.</title>
        <authorList>
            <person name="Spierings G."/>
            <person name="Elders R."/>
            <person name="van Lith B."/>
            <person name="Hofstra H."/>
            <person name="Tommassen J."/>
        </authorList>
    </citation>
    <scope>NUCLEOTIDE SEQUENCE [GENOMIC DNA]</scope>
    <source>
        <strain>LT2</strain>
    </source>
</reference>
<reference key="2">
    <citation type="journal article" date="2001" name="Nature">
        <title>Complete genome sequence of Salmonella enterica serovar Typhimurium LT2.</title>
        <authorList>
            <person name="McClelland M."/>
            <person name="Sanderson K.E."/>
            <person name="Spieth J."/>
            <person name="Clifton S.W."/>
            <person name="Latreille P."/>
            <person name="Courtney L."/>
            <person name="Porwollik S."/>
            <person name="Ali J."/>
            <person name="Dante M."/>
            <person name="Du F."/>
            <person name="Hou S."/>
            <person name="Layman D."/>
            <person name="Leonard S."/>
            <person name="Nguyen C."/>
            <person name="Scott K."/>
            <person name="Holmes A."/>
            <person name="Grewal N."/>
            <person name="Mulvaney E."/>
            <person name="Ryan E."/>
            <person name="Sun H."/>
            <person name="Florea L."/>
            <person name="Miller W."/>
            <person name="Stoneking T."/>
            <person name="Nhan M."/>
            <person name="Waterston R."/>
            <person name="Wilson R.K."/>
        </authorList>
    </citation>
    <scope>NUCLEOTIDE SEQUENCE [LARGE SCALE GENOMIC DNA]</scope>
    <source>
        <strain>LT2 / SGSC1412 / ATCC 700720</strain>
    </source>
</reference>
<comment type="function">
    <text>Uptake of inorganic phosphate, phosphorylated compounds, and some other negatively charged solutes.</text>
</comment>
<comment type="subunit">
    <text>Homotrimer.</text>
</comment>
<comment type="subcellular location">
    <subcellularLocation>
        <location>Cell outer membrane</location>
        <topology>Multi-pass membrane protein</topology>
    </subcellularLocation>
</comment>
<comment type="induction">
    <text>By phosphate starvation.</text>
</comment>
<comment type="similarity">
    <text evidence="1">Belongs to the Gram-negative porin family.</text>
</comment>
<accession>P30705</accession>
<evidence type="ECO:0000305" key="1"/>
<gene>
    <name type="primary">phoE</name>
    <name type="ordered locus">STM0320</name>
</gene>
<name>PHOE_SALTY</name>
<feature type="signal peptide">
    <location>
        <begin position="1"/>
        <end position="20"/>
    </location>
</feature>
<feature type="chain" id="PRO_0000025247" description="Outer membrane porin PhoE">
    <location>
        <begin position="21"/>
        <end position="350"/>
    </location>
</feature>
<keyword id="KW-0998">Cell outer membrane</keyword>
<keyword id="KW-0406">Ion transport</keyword>
<keyword id="KW-0472">Membrane</keyword>
<keyword id="KW-0626">Porin</keyword>
<keyword id="KW-1185">Reference proteome</keyword>
<keyword id="KW-0732">Signal</keyword>
<keyword id="KW-0346">Stress response</keyword>
<keyword id="KW-0812">Transmembrane</keyword>
<keyword id="KW-1134">Transmembrane beta strand</keyword>
<keyword id="KW-0813">Transport</keyword>